<comment type="function">
    <text evidence="1">Catalyzes the attachment of glutamate to tRNA(Glu) in a two-step reaction: glutamate is first activated by ATP to form Glu-AMP and then transferred to the acceptor end of tRNA(Glu).</text>
</comment>
<comment type="catalytic activity">
    <reaction evidence="1">
        <text>tRNA(Glu) + L-glutamate + ATP = L-glutamyl-tRNA(Glu) + AMP + diphosphate</text>
        <dbReference type="Rhea" id="RHEA:23540"/>
        <dbReference type="Rhea" id="RHEA-COMP:9663"/>
        <dbReference type="Rhea" id="RHEA-COMP:9680"/>
        <dbReference type="ChEBI" id="CHEBI:29985"/>
        <dbReference type="ChEBI" id="CHEBI:30616"/>
        <dbReference type="ChEBI" id="CHEBI:33019"/>
        <dbReference type="ChEBI" id="CHEBI:78442"/>
        <dbReference type="ChEBI" id="CHEBI:78520"/>
        <dbReference type="ChEBI" id="CHEBI:456215"/>
        <dbReference type="EC" id="6.1.1.17"/>
    </reaction>
</comment>
<comment type="subcellular location">
    <subcellularLocation>
        <location evidence="1">Cytoplasm</location>
    </subcellularLocation>
</comment>
<comment type="similarity">
    <text evidence="1">Belongs to the class-I aminoacyl-tRNA synthetase family. Glutamate--tRNA ligase type 2 subfamily.</text>
</comment>
<sequence length="555" mass="64095">MKDTVMTYLLENSIKFKGKPNPKAAMGKILGENPDLRSKVKEVNQVISEVLKEIETMSLEEQQAKLDELAPEGLGQKTERKRKEIELKNVKGNVVMRFAPNPSGPLHIGHARASVLNDFFSKKYNGKLVLRLEDTDAKRVLPEAYEMIQEDLKWLGVKVDEVIVQSERLETYYEYGRKLIEMGHAYVCDCDADEFRTLREQGLPCKCRDTTPEENIALWEKMLAGELDNVAVRLKTDIAHKNPSIRDFPIFRIERTPHPKNGTKYHVYPLMNLSVTVDDHLLGMTHVLRGKDHIVNTEKQEYIYNYFGWEIPEYVHYGILKIEGPVLSTSKMHAGILSGEYSGWDDARLGTLRALRKRGIRPEALYKLMVEIGIKQADVRFAWENLYAANKDIIDKDARRFFFVESPKKLVISGAENRKIDLRMHPDRSELGNRELLFDGEIYVSDDLEAGKMYRLMELFNIVVEKVENDIIYAKYDSDDFKVAKTNKASIIHWIPVKDSIPVTVIDENAEKIEGFAEKDFAVVKEDDFVQFERFGFVRIDEKLDNKYTCYLTHK</sequence>
<keyword id="KW-0030">Aminoacyl-tRNA synthetase</keyword>
<keyword id="KW-0067">ATP-binding</keyword>
<keyword id="KW-0963">Cytoplasm</keyword>
<keyword id="KW-0436">Ligase</keyword>
<keyword id="KW-0547">Nucleotide-binding</keyword>
<keyword id="KW-0648">Protein biosynthesis</keyword>
<keyword id="KW-1185">Reference proteome</keyword>
<dbReference type="EC" id="6.1.1.17" evidence="1"/>
<dbReference type="EMBL" id="BX950229">
    <property type="protein sequence ID" value="CAF30567.1"/>
    <property type="molecule type" value="Genomic_DNA"/>
</dbReference>
<dbReference type="RefSeq" id="WP_011170955.1">
    <property type="nucleotide sequence ID" value="NC_005791.1"/>
</dbReference>
<dbReference type="SMR" id="Q6LYI0"/>
<dbReference type="STRING" id="267377.MMP1011"/>
<dbReference type="EnsemblBacteria" id="CAF30567">
    <property type="protein sequence ID" value="CAF30567"/>
    <property type="gene ID" value="MMP1011"/>
</dbReference>
<dbReference type="GeneID" id="2762222"/>
<dbReference type="KEGG" id="mmp:MMP1011"/>
<dbReference type="PATRIC" id="fig|267377.15.peg.1040"/>
<dbReference type="eggNOG" id="arCOG04302">
    <property type="taxonomic scope" value="Archaea"/>
</dbReference>
<dbReference type="HOGENOM" id="CLU_001882_1_3_2"/>
<dbReference type="OrthoDB" id="10470at2157"/>
<dbReference type="Proteomes" id="UP000000590">
    <property type="component" value="Chromosome"/>
</dbReference>
<dbReference type="GO" id="GO:0005829">
    <property type="term" value="C:cytosol"/>
    <property type="evidence" value="ECO:0007669"/>
    <property type="project" value="TreeGrafter"/>
</dbReference>
<dbReference type="GO" id="GO:0032991">
    <property type="term" value="C:protein-containing complex"/>
    <property type="evidence" value="ECO:0007669"/>
    <property type="project" value="UniProtKB-ARBA"/>
</dbReference>
<dbReference type="GO" id="GO:0005524">
    <property type="term" value="F:ATP binding"/>
    <property type="evidence" value="ECO:0007669"/>
    <property type="project" value="UniProtKB-UniRule"/>
</dbReference>
<dbReference type="GO" id="GO:0004818">
    <property type="term" value="F:glutamate-tRNA ligase activity"/>
    <property type="evidence" value="ECO:0007669"/>
    <property type="project" value="UniProtKB-UniRule"/>
</dbReference>
<dbReference type="GO" id="GO:0043604">
    <property type="term" value="P:amide biosynthetic process"/>
    <property type="evidence" value="ECO:0007669"/>
    <property type="project" value="TreeGrafter"/>
</dbReference>
<dbReference type="GO" id="GO:0006424">
    <property type="term" value="P:glutamyl-tRNA aminoacylation"/>
    <property type="evidence" value="ECO:0007669"/>
    <property type="project" value="UniProtKB-UniRule"/>
</dbReference>
<dbReference type="CDD" id="cd09287">
    <property type="entry name" value="GluRS_non_core"/>
    <property type="match status" value="1"/>
</dbReference>
<dbReference type="Gene3D" id="2.40.240.100">
    <property type="match status" value="1"/>
</dbReference>
<dbReference type="Gene3D" id="3.40.50.620">
    <property type="entry name" value="HUPs"/>
    <property type="match status" value="1"/>
</dbReference>
<dbReference type="Gene3D" id="2.40.240.10">
    <property type="entry name" value="Ribosomal Protein L25, Chain P"/>
    <property type="match status" value="1"/>
</dbReference>
<dbReference type="HAMAP" id="MF_02076">
    <property type="entry name" value="Glu_tRNA_synth_type2"/>
    <property type="match status" value="1"/>
</dbReference>
<dbReference type="InterPro" id="IPR001412">
    <property type="entry name" value="aa-tRNA-synth_I_CS"/>
</dbReference>
<dbReference type="InterPro" id="IPR050132">
    <property type="entry name" value="Gln/Glu-tRNA_Ligase"/>
</dbReference>
<dbReference type="InterPro" id="IPR004526">
    <property type="entry name" value="Glu-tRNA-synth_arc/euk"/>
</dbReference>
<dbReference type="InterPro" id="IPR000924">
    <property type="entry name" value="Glu/Gln-tRNA-synth"/>
</dbReference>
<dbReference type="InterPro" id="IPR020058">
    <property type="entry name" value="Glu/Gln-tRNA-synth_Ib_cat-dom"/>
</dbReference>
<dbReference type="InterPro" id="IPR020059">
    <property type="entry name" value="Glu/Gln-tRNA-synth_Ib_codon-bd"/>
</dbReference>
<dbReference type="InterPro" id="IPR020056">
    <property type="entry name" value="Rbsml_bL25/Gln-tRNA_synth_N"/>
</dbReference>
<dbReference type="InterPro" id="IPR011035">
    <property type="entry name" value="Ribosomal_bL25/Gln-tRNA_synth"/>
</dbReference>
<dbReference type="InterPro" id="IPR014729">
    <property type="entry name" value="Rossmann-like_a/b/a_fold"/>
</dbReference>
<dbReference type="InterPro" id="IPR049437">
    <property type="entry name" value="tRNA-synt_1c_C2"/>
</dbReference>
<dbReference type="NCBIfam" id="TIGR00463">
    <property type="entry name" value="gltX_arch"/>
    <property type="match status" value="1"/>
</dbReference>
<dbReference type="NCBIfam" id="NF003169">
    <property type="entry name" value="PRK04156.1"/>
    <property type="match status" value="1"/>
</dbReference>
<dbReference type="PANTHER" id="PTHR43097:SF5">
    <property type="entry name" value="GLUTAMATE--TRNA LIGASE"/>
    <property type="match status" value="1"/>
</dbReference>
<dbReference type="PANTHER" id="PTHR43097">
    <property type="entry name" value="GLUTAMINE-TRNA LIGASE"/>
    <property type="match status" value="1"/>
</dbReference>
<dbReference type="Pfam" id="PF00749">
    <property type="entry name" value="tRNA-synt_1c"/>
    <property type="match status" value="1"/>
</dbReference>
<dbReference type="Pfam" id="PF03950">
    <property type="entry name" value="tRNA-synt_1c_C"/>
    <property type="match status" value="1"/>
</dbReference>
<dbReference type="Pfam" id="PF20974">
    <property type="entry name" value="tRNA-synt_1c_C2"/>
    <property type="match status" value="1"/>
</dbReference>
<dbReference type="PRINTS" id="PR00987">
    <property type="entry name" value="TRNASYNTHGLU"/>
</dbReference>
<dbReference type="SUPFAM" id="SSF52374">
    <property type="entry name" value="Nucleotidylyl transferase"/>
    <property type="match status" value="1"/>
</dbReference>
<dbReference type="SUPFAM" id="SSF50715">
    <property type="entry name" value="Ribosomal protein L25-like"/>
    <property type="match status" value="1"/>
</dbReference>
<dbReference type="PROSITE" id="PS00178">
    <property type="entry name" value="AA_TRNA_LIGASE_I"/>
    <property type="match status" value="1"/>
</dbReference>
<proteinExistence type="inferred from homology"/>
<gene>
    <name evidence="1" type="primary">gltX</name>
    <name type="ordered locus">MMP1011</name>
</gene>
<feature type="chain" id="PRO_0000119720" description="Glutamate--tRNA ligase">
    <location>
        <begin position="1"/>
        <end position="555"/>
    </location>
</feature>
<feature type="short sequence motif" description="'HIGH' region" evidence="1">
    <location>
        <begin position="100"/>
        <end position="110"/>
    </location>
</feature>
<organism>
    <name type="scientific">Methanococcus maripaludis (strain DSM 14266 / JCM 13030 / NBRC 101832 / S2 / LL)</name>
    <dbReference type="NCBI Taxonomy" id="267377"/>
    <lineage>
        <taxon>Archaea</taxon>
        <taxon>Methanobacteriati</taxon>
        <taxon>Methanobacteriota</taxon>
        <taxon>Methanomada group</taxon>
        <taxon>Methanococci</taxon>
        <taxon>Methanococcales</taxon>
        <taxon>Methanococcaceae</taxon>
        <taxon>Methanococcus</taxon>
    </lineage>
</organism>
<name>SYE_METMP</name>
<evidence type="ECO:0000255" key="1">
    <source>
        <dbReference type="HAMAP-Rule" id="MF_02076"/>
    </source>
</evidence>
<accession>Q6LYI0</accession>
<protein>
    <recommendedName>
        <fullName evidence="1">Glutamate--tRNA ligase</fullName>
        <ecNumber evidence="1">6.1.1.17</ecNumber>
    </recommendedName>
    <alternativeName>
        <fullName evidence="1">Glutamyl-tRNA synthetase</fullName>
        <shortName evidence="1">GluRS</shortName>
    </alternativeName>
</protein>
<reference key="1">
    <citation type="journal article" date="2004" name="J. Bacteriol.">
        <title>Complete genome sequence of the genetically tractable hydrogenotrophic methanogen Methanococcus maripaludis.</title>
        <authorList>
            <person name="Hendrickson E.L."/>
            <person name="Kaul R."/>
            <person name="Zhou Y."/>
            <person name="Bovee D."/>
            <person name="Chapman P."/>
            <person name="Chung J."/>
            <person name="Conway de Macario E."/>
            <person name="Dodsworth J.A."/>
            <person name="Gillett W."/>
            <person name="Graham D.E."/>
            <person name="Hackett M."/>
            <person name="Haydock A.K."/>
            <person name="Kang A."/>
            <person name="Land M.L."/>
            <person name="Levy R."/>
            <person name="Lie T.J."/>
            <person name="Major T.A."/>
            <person name="Moore B.C."/>
            <person name="Porat I."/>
            <person name="Palmeiri A."/>
            <person name="Rouse G."/>
            <person name="Saenphimmachak C."/>
            <person name="Soell D."/>
            <person name="Van Dien S."/>
            <person name="Wang T."/>
            <person name="Whitman W.B."/>
            <person name="Xia Q."/>
            <person name="Zhang Y."/>
            <person name="Larimer F.W."/>
            <person name="Olson M.V."/>
            <person name="Leigh J.A."/>
        </authorList>
    </citation>
    <scope>NUCLEOTIDE SEQUENCE [LARGE SCALE GENOMIC DNA]</scope>
    <source>
        <strain>DSM 14266 / JCM 13030 / NBRC 101832 / S2 / LL</strain>
    </source>
</reference>